<reference key="1">
    <citation type="journal article" date="2000" name="Nature">
        <title>Sequence and analysis of chromosome 1 of the plant Arabidopsis thaliana.</title>
        <authorList>
            <person name="Theologis A."/>
            <person name="Ecker J.R."/>
            <person name="Palm C.J."/>
            <person name="Federspiel N.A."/>
            <person name="Kaul S."/>
            <person name="White O."/>
            <person name="Alonso J."/>
            <person name="Altafi H."/>
            <person name="Araujo R."/>
            <person name="Bowman C.L."/>
            <person name="Brooks S.Y."/>
            <person name="Buehler E."/>
            <person name="Chan A."/>
            <person name="Chao Q."/>
            <person name="Chen H."/>
            <person name="Cheuk R.F."/>
            <person name="Chin C.W."/>
            <person name="Chung M.K."/>
            <person name="Conn L."/>
            <person name="Conway A.B."/>
            <person name="Conway A.R."/>
            <person name="Creasy T.H."/>
            <person name="Dewar K."/>
            <person name="Dunn P."/>
            <person name="Etgu P."/>
            <person name="Feldblyum T.V."/>
            <person name="Feng J.-D."/>
            <person name="Fong B."/>
            <person name="Fujii C.Y."/>
            <person name="Gill J.E."/>
            <person name="Goldsmith A.D."/>
            <person name="Haas B."/>
            <person name="Hansen N.F."/>
            <person name="Hughes B."/>
            <person name="Huizar L."/>
            <person name="Hunter J.L."/>
            <person name="Jenkins J."/>
            <person name="Johnson-Hopson C."/>
            <person name="Khan S."/>
            <person name="Khaykin E."/>
            <person name="Kim C.J."/>
            <person name="Koo H.L."/>
            <person name="Kremenetskaia I."/>
            <person name="Kurtz D.B."/>
            <person name="Kwan A."/>
            <person name="Lam B."/>
            <person name="Langin-Hooper S."/>
            <person name="Lee A."/>
            <person name="Lee J.M."/>
            <person name="Lenz C.A."/>
            <person name="Li J.H."/>
            <person name="Li Y.-P."/>
            <person name="Lin X."/>
            <person name="Liu S.X."/>
            <person name="Liu Z.A."/>
            <person name="Luros J.S."/>
            <person name="Maiti R."/>
            <person name="Marziali A."/>
            <person name="Militscher J."/>
            <person name="Miranda M."/>
            <person name="Nguyen M."/>
            <person name="Nierman W.C."/>
            <person name="Osborne B.I."/>
            <person name="Pai G."/>
            <person name="Peterson J."/>
            <person name="Pham P.K."/>
            <person name="Rizzo M."/>
            <person name="Rooney T."/>
            <person name="Rowley D."/>
            <person name="Sakano H."/>
            <person name="Salzberg S.L."/>
            <person name="Schwartz J.R."/>
            <person name="Shinn P."/>
            <person name="Southwick A.M."/>
            <person name="Sun H."/>
            <person name="Tallon L.J."/>
            <person name="Tambunga G."/>
            <person name="Toriumi M.J."/>
            <person name="Town C.D."/>
            <person name="Utterback T."/>
            <person name="Van Aken S."/>
            <person name="Vaysberg M."/>
            <person name="Vysotskaia V.S."/>
            <person name="Walker M."/>
            <person name="Wu D."/>
            <person name="Yu G."/>
            <person name="Fraser C.M."/>
            <person name="Venter J.C."/>
            <person name="Davis R.W."/>
        </authorList>
    </citation>
    <scope>NUCLEOTIDE SEQUENCE [LARGE SCALE GENOMIC DNA]</scope>
    <source>
        <strain>cv. Columbia</strain>
    </source>
</reference>
<reference key="2">
    <citation type="journal article" date="2017" name="Plant J.">
        <title>Araport11: a complete reannotation of the Arabidopsis thaliana reference genome.</title>
        <authorList>
            <person name="Cheng C.Y."/>
            <person name="Krishnakumar V."/>
            <person name="Chan A.P."/>
            <person name="Thibaud-Nissen F."/>
            <person name="Schobel S."/>
            <person name="Town C.D."/>
        </authorList>
    </citation>
    <scope>GENOME REANNOTATION</scope>
    <source>
        <strain>cv. Columbia</strain>
    </source>
</reference>
<reference key="3">
    <citation type="submission" date="2007-03" db="EMBL/GenBank/DDBJ databases">
        <title>Arabidopsis ORF clones.</title>
        <authorList>
            <person name="Bautista V.R."/>
            <person name="Kim C.J."/>
            <person name="Chen H."/>
            <person name="Wu S.Y."/>
            <person name="De Los Reyes C."/>
            <person name="Ecker J.R."/>
        </authorList>
    </citation>
    <scope>NUCLEOTIDE SEQUENCE [LARGE SCALE MRNA]</scope>
    <source>
        <strain>cv. Columbia</strain>
    </source>
</reference>
<reference key="4">
    <citation type="journal article" date="2009" name="Plant Physiol.">
        <title>Large-scale Arabidopsis phosphoproteome profiling reveals novel chloroplast kinase substrates and phosphorylation networks.</title>
        <authorList>
            <person name="Reiland S."/>
            <person name="Messerli G."/>
            <person name="Baerenfaller K."/>
            <person name="Gerrits B."/>
            <person name="Endler A."/>
            <person name="Grossmann J."/>
            <person name="Gruissem W."/>
            <person name="Baginsky S."/>
        </authorList>
    </citation>
    <scope>IDENTIFICATION BY MASS SPECTROMETRY [LARGE SCALE ANALYSIS]</scope>
</reference>
<reference key="5">
    <citation type="journal article" date="2014" name="J. Plant Physiol.">
        <title>GIP1 may act as a coactivator that enhances transcriptional activity of LBD18 in Arabidopsis.</title>
        <authorList>
            <person name="Lee H.W."/>
            <person name="Park J.H."/>
            <person name="Park M.Y."/>
            <person name="Kim J."/>
        </authorList>
    </citation>
    <scope>SUBCELLULAR LOCATION</scope>
    <scope>TISSUE SPECIFICITY</scope>
</reference>
<keyword id="KW-0539">Nucleus</keyword>
<keyword id="KW-1185">Reference proteome</keyword>
<feature type="chain" id="PRO_0000435636" description="GBF-interacting protein 1-like">
    <location>
        <begin position="1"/>
        <end position="575"/>
    </location>
</feature>
<feature type="region of interest" description="Disordered" evidence="2">
    <location>
        <begin position="66"/>
        <end position="171"/>
    </location>
</feature>
<feature type="region of interest" description="Disordered" evidence="2">
    <location>
        <begin position="229"/>
        <end position="296"/>
    </location>
</feature>
<feature type="compositionally biased region" description="Polar residues" evidence="2">
    <location>
        <begin position="90"/>
        <end position="102"/>
    </location>
</feature>
<feature type="compositionally biased region" description="Polar residues" evidence="2">
    <location>
        <begin position="115"/>
        <end position="138"/>
    </location>
</feature>
<feature type="compositionally biased region" description="Polar residues" evidence="2">
    <location>
        <begin position="161"/>
        <end position="171"/>
    </location>
</feature>
<feature type="compositionally biased region" description="Basic and acidic residues" evidence="2">
    <location>
        <begin position="268"/>
        <end position="281"/>
    </location>
</feature>
<sequence>MSSSDGGSSRVSIPYHLRKTLQKIREYTGKQHSDEDIFAVYKDSFNDPHETAQKLLFLDTFHEVRSKREKKKEPIVPVTQPSGRGGRRNFASSNSYQGSGRNASFKRENGANHVTRGSRTAQPATNKASNITVPNETKVSGPASIPSEVSNHKAQDDPSLISASRCSSKSDQAIEIETASKQGKNQSLPKPDVSEQSHVTFPFHLQVAKGLQNGLTFGSFDSNFVKEVSSSNGASGGYDSNFESSHGTGDDERESSPTTNGITGVASAREETSTVSEDKDYGISNSATGAEPVVHSDHIVPPVEEVPKEEALSNTETHQIAYGQEAPLSVFGLVPSLSAIGQPVNTEAAETQPGNSNSPPISLVSYPPDQSSIAAATQQTNFLRQQYPPNFFPYGYYSPYYMPPPYIHQFLSPNGIPQQSYFPQGAALTAPSHAKPVDNTENPPTTNPYLHTSPMVASSIPSTTTLNSIHSEEKASHLTESAAAWIGQGFGNLQVNPMYNLAYQGQPLGFPVVQAGHGGLMGMHQPTQPMAAASTTYQTLPPPPHTTTAMGEPIGHPHIAYQQPQAALTNWVNNY</sequence>
<evidence type="ECO:0000250" key="1">
    <source>
        <dbReference type="UniProtKB" id="Q8VZS6"/>
    </source>
</evidence>
<evidence type="ECO:0000256" key="2">
    <source>
        <dbReference type="SAM" id="MobiDB-lite"/>
    </source>
</evidence>
<evidence type="ECO:0000269" key="3">
    <source>
    </source>
</evidence>
<evidence type="ECO:0000303" key="4">
    <source>
    </source>
</evidence>
<evidence type="ECO:0000305" key="5"/>
<evidence type="ECO:0000312" key="6">
    <source>
        <dbReference type="Araport" id="AT1G55820"/>
    </source>
</evidence>
<evidence type="ECO:0000312" key="7">
    <source>
        <dbReference type="EMBL" id="AAF79311.1"/>
    </source>
</evidence>
<evidence type="ECO:0000312" key="8">
    <source>
        <dbReference type="EMBL" id="AAF79498.1"/>
    </source>
</evidence>
<dbReference type="EMBL" id="AC002304">
    <property type="protein sequence ID" value="AAF79311.1"/>
    <property type="status" value="ALT_SEQ"/>
    <property type="molecule type" value="Genomic_DNA"/>
</dbReference>
<dbReference type="EMBL" id="AC002328">
    <property type="protein sequence ID" value="AAF79498.1"/>
    <property type="status" value="ALT_SEQ"/>
    <property type="molecule type" value="Genomic_DNA"/>
</dbReference>
<dbReference type="EMBL" id="CP002684">
    <property type="protein sequence ID" value="AEE33303.1"/>
    <property type="molecule type" value="Genomic_DNA"/>
</dbReference>
<dbReference type="EMBL" id="BT030359">
    <property type="protein sequence ID" value="ABO38772.1"/>
    <property type="molecule type" value="mRNA"/>
</dbReference>
<dbReference type="PIR" id="F96599">
    <property type="entry name" value="F96599"/>
</dbReference>
<dbReference type="RefSeq" id="NP_175978.2">
    <property type="nucleotide sequence ID" value="NM_104459.4"/>
</dbReference>
<dbReference type="FunCoup" id="A4FVR1">
    <property type="interactions" value="63"/>
</dbReference>
<dbReference type="IntAct" id="A4FVR1">
    <property type="interactions" value="1"/>
</dbReference>
<dbReference type="STRING" id="3702.A4FVR1"/>
<dbReference type="GlyGen" id="A4FVR1">
    <property type="glycosylation" value="3 sites, 1 O-linked glycan (2 sites)"/>
</dbReference>
<dbReference type="iPTMnet" id="A4FVR1"/>
<dbReference type="PaxDb" id="3702-AT1G55820.1"/>
<dbReference type="ProteomicsDB" id="220765"/>
<dbReference type="EnsemblPlants" id="AT1G55820.1">
    <property type="protein sequence ID" value="AT1G55820.1"/>
    <property type="gene ID" value="AT1G55820"/>
</dbReference>
<dbReference type="GeneID" id="842032"/>
<dbReference type="Gramene" id="AT1G55820.1">
    <property type="protein sequence ID" value="AT1G55820.1"/>
    <property type="gene ID" value="AT1G55820"/>
</dbReference>
<dbReference type="KEGG" id="ath:AT1G55820"/>
<dbReference type="Araport" id="AT1G55820"/>
<dbReference type="TAIR" id="AT1G55820"/>
<dbReference type="eggNOG" id="ENOG502RQC4">
    <property type="taxonomic scope" value="Eukaryota"/>
</dbReference>
<dbReference type="HOGENOM" id="CLU_482657_0_0_1"/>
<dbReference type="InParanoid" id="A4FVR1"/>
<dbReference type="OMA" id="PTNFFPY"/>
<dbReference type="PhylomeDB" id="A4FVR1"/>
<dbReference type="PRO" id="PR:A4FVR1"/>
<dbReference type="Proteomes" id="UP000006548">
    <property type="component" value="Chromosome 1"/>
</dbReference>
<dbReference type="ExpressionAtlas" id="A4FVR1">
    <property type="expression patterns" value="baseline and differential"/>
</dbReference>
<dbReference type="GO" id="GO:0005634">
    <property type="term" value="C:nucleus"/>
    <property type="evidence" value="ECO:0000314"/>
    <property type="project" value="UniProtKB"/>
</dbReference>
<dbReference type="InterPro" id="IPR044277">
    <property type="entry name" value="GIP1"/>
</dbReference>
<dbReference type="InterPro" id="IPR009719">
    <property type="entry name" value="GIP1_N"/>
</dbReference>
<dbReference type="InterPro" id="IPR009060">
    <property type="entry name" value="UBA-like_sf"/>
</dbReference>
<dbReference type="PANTHER" id="PTHR46775">
    <property type="entry name" value="FLOCCULATION PROTEIN (DUF1296)"/>
    <property type="match status" value="1"/>
</dbReference>
<dbReference type="PANTHER" id="PTHR46775:SF2">
    <property type="entry name" value="GBF-INTERACTING PROTEIN 1-LIKE"/>
    <property type="match status" value="1"/>
</dbReference>
<dbReference type="Pfam" id="PF06972">
    <property type="entry name" value="GIP1_N"/>
    <property type="match status" value="1"/>
</dbReference>
<dbReference type="SUPFAM" id="SSF46934">
    <property type="entry name" value="UBA-like"/>
    <property type="match status" value="1"/>
</dbReference>
<accession>A4FVR1</accession>
<accession>Q9LFZ2</accession>
<accession>Q9LG31</accession>
<organism>
    <name type="scientific">Arabidopsis thaliana</name>
    <name type="common">Mouse-ear cress</name>
    <dbReference type="NCBI Taxonomy" id="3702"/>
    <lineage>
        <taxon>Eukaryota</taxon>
        <taxon>Viridiplantae</taxon>
        <taxon>Streptophyta</taxon>
        <taxon>Embryophyta</taxon>
        <taxon>Tracheophyta</taxon>
        <taxon>Spermatophyta</taxon>
        <taxon>Magnoliopsida</taxon>
        <taxon>eudicotyledons</taxon>
        <taxon>Gunneridae</taxon>
        <taxon>Pentapetalae</taxon>
        <taxon>rosids</taxon>
        <taxon>malvids</taxon>
        <taxon>Brassicales</taxon>
        <taxon>Brassicaceae</taxon>
        <taxon>Camelineae</taxon>
        <taxon>Arabidopsis</taxon>
    </lineage>
</organism>
<protein>
    <recommendedName>
        <fullName evidence="4">GBF-interacting protein 1-like</fullName>
        <shortName evidence="4">Protein GIP1-like</shortName>
    </recommendedName>
</protein>
<name>GIP1L_ARATH</name>
<proteinExistence type="evidence at protein level"/>
<comment type="function">
    <text evidence="1">May act as a transcriptional coactivator of LOB domain-containing proteins.</text>
</comment>
<comment type="subcellular location">
    <subcellularLocation>
        <location evidence="3">Nucleus</location>
    </subcellularLocation>
</comment>
<comment type="tissue specificity">
    <text evidence="3">Expressed in roots, leaves, stems and flowers.</text>
</comment>
<comment type="similarity">
    <text>Belongs to the GIP1 family.</text>
</comment>
<comment type="sequence caution" evidence="5">
    <conflict type="erroneous gene model prediction">
        <sequence resource="EMBL-CDS" id="AAF79311"/>
    </conflict>
</comment>
<comment type="sequence caution" evidence="5">
    <conflict type="erroneous gene model prediction">
        <sequence resource="EMBL-CDS" id="AAF79498"/>
    </conflict>
</comment>
<gene>
    <name evidence="4" type="primary">GIP1L</name>
    <name evidence="6" type="ordered locus">At1g55820</name>
    <name evidence="7" type="ORF">F14J16.6</name>
    <name evidence="8" type="ORF">F20N2.19</name>
</gene>